<gene>
    <name evidence="5" type="primary">PEX6</name>
</gene>
<sequence>MALAVLRVLDPFPAETPPLAVLLPPGGPWPATGLGLVLALRPASESPAGPALLVAALEGPGSQNGQRGPGPPQLLVSRALLRLLALGPGARVRARPVRRPPALGWALLGSAPGPGPGPRVGPLLVRRGESLPVPGSRVLETRPALQGLLGPGTRLAVTELRGRAKLGPESTQHSRLPPPPVASSFAVSHAVRQLKGVLGGTGDALGVTRSCLRGLGLFQGEWVWVARVGEFPNTSQPHLAKVQLLEPRWDLSERLGPSSGQLGEPLADGLVFVPATLAFNLGCDPLEVGELRIQRYLEGSIIPEDRGSCSLMSGPPFARELHIEIVSSPHYSANGDYDHVLYRHFHTPRVVQEGDVLCVPTVGQVEILEGSPEKLPRWREVFFKVKKAVGEAPDGPASAFLADTTHTSLYMAGSALSRVPLLPSGRSTPWDSLSPPGLEALVNELCAILKPHLQPGGTLLTGTSCVLLQGPPGSGKTTAVTAACSRLGLHLLKVPCYSLCADSSGAVETKLQAAFSRARRCRPAVLLLTAIDLLGRDRDGLDEDARVVATLRHLLLDEDPVSNCPPLMVVATTSRAQDLPTDVHTAFPHELEVPVLSEEQRLSVLQALTAHLPLGQEVNLLQLARRCAGFVVGDLYALLTHTSRVACARIRASGLAGGLSEEDEGELCAAGFPLLAEDFGQALDQLQTAHSQAVGAPKIPSVSWHDVGGLQDVKKEILETIQLPLEHPELLSLGLRRSGLLLHGPPGTGKTLLAKAVATECSLTFLSVKGPELINMYVGQSEENVREVFARARAAAPCIIFFDELDSLAPSRGRSGDSGGVMDRVVSQLLAELDGLHSTQDVFVIGATNRPDLLDPALLRPGRFDKLVFVGASEDRASQLRVLSAITRKFKLEASVSLVNVLDRCPPQLTGADLYSLCSDAMTTALKRRVRDLEEGLEMGSSALLLTMEDLLQAAARLQPSVSEQELLRYKRIQRKFAAC</sequence>
<feature type="chain" id="PRO_0000456980" description="Peroxisomal ATPase PEX6">
    <location>
        <begin position="1"/>
        <end position="980"/>
    </location>
</feature>
<feature type="binding site" evidence="2">
    <location>
        <begin position="470"/>
        <end position="477"/>
    </location>
    <ligand>
        <name>ATP</name>
        <dbReference type="ChEBI" id="CHEBI:30616"/>
    </ligand>
</feature>
<feature type="binding site" evidence="2">
    <location>
        <begin position="744"/>
        <end position="751"/>
    </location>
    <ligand>
        <name>ATP</name>
        <dbReference type="ChEBI" id="CHEBI:30616"/>
    </ligand>
</feature>
<feature type="modified residue" description="Omega-N-methylarginine" evidence="1">
    <location>
        <position position="119"/>
    </location>
</feature>
<keyword id="KW-0067">ATP-binding</keyword>
<keyword id="KW-0966">Cell projection</keyword>
<keyword id="KW-0963">Cytoplasm</keyword>
<keyword id="KW-0378">Hydrolase</keyword>
<keyword id="KW-0472">Membrane</keyword>
<keyword id="KW-0488">Methylation</keyword>
<keyword id="KW-0547">Nucleotide-binding</keyword>
<keyword id="KW-0576">Peroxisome</keyword>
<keyword id="KW-0962">Peroxisome biogenesis</keyword>
<keyword id="KW-1185">Reference proteome</keyword>
<keyword id="KW-0677">Repeat</keyword>
<reference key="1">
    <citation type="journal article" date="2011" name="Nat. Biotechnol.">
        <title>The genomic sequence of the Chinese hamster ovary (CHO)-K1 cell line.</title>
        <authorList>
            <person name="Xu X."/>
            <person name="Nagarajan H."/>
            <person name="Lewis N.E."/>
            <person name="Pan S."/>
            <person name="Cai Z."/>
            <person name="Liu X."/>
            <person name="Chen W."/>
            <person name="Xie M."/>
            <person name="Wang W."/>
            <person name="Hammond S."/>
            <person name="Andersen M.R."/>
            <person name="Neff N."/>
            <person name="Passarelli B."/>
            <person name="Koh W."/>
            <person name="Fan H.C."/>
            <person name="Wang J."/>
            <person name="Gui Y."/>
            <person name="Lee K.H."/>
            <person name="Betenbaugh M.J."/>
            <person name="Quake S.R."/>
            <person name="Famili I."/>
            <person name="Palsson B.O."/>
            <person name="Wang J."/>
        </authorList>
    </citation>
    <scope>NUCLEOTIDE SEQUENCE [LARGE SCALE GENOMIC DNA]</scope>
</reference>
<reference key="2">
    <citation type="journal article" date="2013" name="Nat. Biotechnol.">
        <title>Chinese hamster genome sequenced from sorted chromosomes.</title>
        <authorList>
            <person name="Brinkrolf K."/>
            <person name="Rupp O."/>
            <person name="Laux H."/>
            <person name="Kollin F."/>
            <person name="Ernst W."/>
            <person name="Linke B."/>
            <person name="Kofler R."/>
            <person name="Romand S."/>
            <person name="Hesse F."/>
            <person name="Budach W.E."/>
            <person name="Galosy S."/>
            <person name="Muller D."/>
            <person name="Noll T."/>
            <person name="Wienberg J."/>
            <person name="Jostock T."/>
            <person name="Leonard M."/>
            <person name="Grillari J."/>
            <person name="Tauch A."/>
            <person name="Goesmann A."/>
            <person name="Helk B."/>
            <person name="Mott J.E."/>
            <person name="Puhler A."/>
            <person name="Borth N."/>
        </authorList>
    </citation>
    <scope>NUCLEOTIDE SEQUENCE [LARGE SCALE GENOMIC DNA]</scope>
</reference>
<reference key="3">
    <citation type="journal article" date="1998" name="Proc. Natl. Acad. Sci. U.S.A.">
        <title>Human PEX1 cloned by functional complementation on a CHO cell mutant is responsible for peroxisome-deficient Zellweger syndrome of complementation group I.</title>
        <authorList>
            <person name="Tamura S."/>
            <person name="Okumoto K."/>
            <person name="Toyama R."/>
            <person name="Shimozawa N."/>
            <person name="Tsukamoto T."/>
            <person name="Suzuki Y."/>
            <person name="Osumi T."/>
            <person name="Kondo N."/>
            <person name="Fujiki Y."/>
        </authorList>
    </citation>
    <scope>FUNCTION</scope>
</reference>
<reference key="4">
    <citation type="journal article" date="2011" name="Traffic">
        <title>Recruiting mechanism of the AAA peroxins, Pex1p and Pex6p, to Pex26p on the peroxisomal membrane.</title>
        <authorList>
            <person name="Nashiro C."/>
            <person name="Kashiwagi A."/>
            <person name="Matsuzaki T."/>
            <person name="Tamura S."/>
            <person name="Fujiki Y."/>
        </authorList>
    </citation>
    <scope>FUNCTION</scope>
</reference>
<dbReference type="EC" id="3.6.4.-" evidence="1"/>
<dbReference type="EMBL" id="JH000627">
    <property type="status" value="NOT_ANNOTATED_CDS"/>
    <property type="molecule type" value="Genomic_DNA"/>
</dbReference>
<dbReference type="EMBL" id="KE663889">
    <property type="protein sequence ID" value="ERE90628.1"/>
    <property type="molecule type" value="Genomic_DNA"/>
</dbReference>
<dbReference type="SMR" id="A0A061IR73"/>
<dbReference type="Ensembl" id="ENSCGRT00001018142.1">
    <property type="protein sequence ID" value="ENSCGRP00001013905.1"/>
    <property type="gene ID" value="ENSCGRG00001014931.1"/>
</dbReference>
<dbReference type="Ensembl" id="ENSCGRT00015028731">
    <property type="protein sequence ID" value="ENSCGRP00015023429"/>
    <property type="gene ID" value="ENSCGRG00015017783"/>
</dbReference>
<dbReference type="GeneTree" id="ENSGT00550000074953"/>
<dbReference type="Proteomes" id="UP000001075">
    <property type="component" value="Unassembled WGS sequence"/>
</dbReference>
<dbReference type="Proteomes" id="UP000030759">
    <property type="component" value="Unassembled WGS sequence"/>
</dbReference>
<dbReference type="Proteomes" id="UP000694386">
    <property type="component" value="Unplaced"/>
</dbReference>
<dbReference type="Proteomes" id="UP001108280">
    <property type="component" value="Unplaced"/>
</dbReference>
<dbReference type="GO" id="GO:0005829">
    <property type="term" value="C:cytosol"/>
    <property type="evidence" value="ECO:0007669"/>
    <property type="project" value="UniProtKB-SubCell"/>
</dbReference>
<dbReference type="GO" id="GO:0005778">
    <property type="term" value="C:peroxisomal membrane"/>
    <property type="evidence" value="ECO:0000250"/>
    <property type="project" value="UniProtKB"/>
</dbReference>
<dbReference type="GO" id="GO:0001750">
    <property type="term" value="C:photoreceptor outer segment"/>
    <property type="evidence" value="ECO:0007669"/>
    <property type="project" value="UniProtKB-SubCell"/>
</dbReference>
<dbReference type="GO" id="GO:0005524">
    <property type="term" value="F:ATP binding"/>
    <property type="evidence" value="ECO:0007669"/>
    <property type="project" value="UniProtKB-KW"/>
</dbReference>
<dbReference type="GO" id="GO:0016887">
    <property type="term" value="F:ATP hydrolysis activity"/>
    <property type="evidence" value="ECO:0007669"/>
    <property type="project" value="Ensembl"/>
</dbReference>
<dbReference type="GO" id="GO:0140318">
    <property type="term" value="F:protein transporter activity"/>
    <property type="evidence" value="ECO:0000250"/>
    <property type="project" value="UniProtKB"/>
</dbReference>
<dbReference type="GO" id="GO:0044877">
    <property type="term" value="F:protein-containing complex binding"/>
    <property type="evidence" value="ECO:0007669"/>
    <property type="project" value="Ensembl"/>
</dbReference>
<dbReference type="GO" id="GO:0140036">
    <property type="term" value="F:ubiquitin-modified protein reader activity"/>
    <property type="evidence" value="ECO:0000250"/>
    <property type="project" value="UniProtKB"/>
</dbReference>
<dbReference type="GO" id="GO:0016558">
    <property type="term" value="P:protein import into peroxisome matrix"/>
    <property type="evidence" value="ECO:0000315"/>
    <property type="project" value="UniProtKB"/>
</dbReference>
<dbReference type="GO" id="GO:0016562">
    <property type="term" value="P:protein import into peroxisome matrix, receptor recycling"/>
    <property type="evidence" value="ECO:0000250"/>
    <property type="project" value="UniProtKB"/>
</dbReference>
<dbReference type="GO" id="GO:0016561">
    <property type="term" value="P:protein import into peroxisome matrix, translocation"/>
    <property type="evidence" value="ECO:0007669"/>
    <property type="project" value="Ensembl"/>
</dbReference>
<dbReference type="GO" id="GO:0050821">
    <property type="term" value="P:protein stabilization"/>
    <property type="evidence" value="ECO:0007669"/>
    <property type="project" value="Ensembl"/>
</dbReference>
<dbReference type="GO" id="GO:0006625">
    <property type="term" value="P:protein targeting to peroxisome"/>
    <property type="evidence" value="ECO:0007669"/>
    <property type="project" value="Ensembl"/>
</dbReference>
<dbReference type="GO" id="GO:0043335">
    <property type="term" value="P:protein unfolding"/>
    <property type="evidence" value="ECO:0000250"/>
    <property type="project" value="UniProtKB"/>
</dbReference>
<dbReference type="CDD" id="cd19527">
    <property type="entry name" value="RecA-like_PEX6_r2"/>
    <property type="match status" value="1"/>
</dbReference>
<dbReference type="CDD" id="cd19481">
    <property type="entry name" value="RecA-like_protease"/>
    <property type="match status" value="1"/>
</dbReference>
<dbReference type="FunFam" id="3.40.50.300:FF:000109">
    <property type="entry name" value="Peroxisomal biogenesis factor 6"/>
    <property type="match status" value="1"/>
</dbReference>
<dbReference type="FunFam" id="1.10.8.60:FF:000039">
    <property type="entry name" value="peroxisome biogenesis factor 6"/>
    <property type="match status" value="1"/>
</dbReference>
<dbReference type="FunFam" id="1.10.8.60:FF:000059">
    <property type="entry name" value="peroxisome biogenesis factor 6"/>
    <property type="match status" value="1"/>
</dbReference>
<dbReference type="FunFam" id="3.40.50.300:FF:000988">
    <property type="entry name" value="peroxisome biogenesis factor 6"/>
    <property type="match status" value="1"/>
</dbReference>
<dbReference type="Gene3D" id="1.10.8.60">
    <property type="match status" value="2"/>
</dbReference>
<dbReference type="Gene3D" id="3.40.50.300">
    <property type="entry name" value="P-loop containing nucleotide triphosphate hydrolases"/>
    <property type="match status" value="2"/>
</dbReference>
<dbReference type="InterPro" id="IPR003593">
    <property type="entry name" value="AAA+_ATPase"/>
</dbReference>
<dbReference type="InterPro" id="IPR050168">
    <property type="entry name" value="AAA_ATPase_domain"/>
</dbReference>
<dbReference type="InterPro" id="IPR003959">
    <property type="entry name" value="ATPase_AAA_core"/>
</dbReference>
<dbReference type="InterPro" id="IPR003960">
    <property type="entry name" value="ATPase_AAA_CS"/>
</dbReference>
<dbReference type="InterPro" id="IPR027417">
    <property type="entry name" value="P-loop_NTPase"/>
</dbReference>
<dbReference type="InterPro" id="IPR047533">
    <property type="entry name" value="RecA-like_PEX6_r2"/>
</dbReference>
<dbReference type="PANTHER" id="PTHR23077">
    <property type="entry name" value="AAA-FAMILY ATPASE"/>
    <property type="match status" value="1"/>
</dbReference>
<dbReference type="PANTHER" id="PTHR23077:SF9">
    <property type="entry name" value="PEROXISOMAL ATPASE PEX6"/>
    <property type="match status" value="1"/>
</dbReference>
<dbReference type="Pfam" id="PF00004">
    <property type="entry name" value="AAA"/>
    <property type="match status" value="2"/>
</dbReference>
<dbReference type="Pfam" id="PF25395">
    <property type="entry name" value="DPBB_PEX6"/>
    <property type="match status" value="1"/>
</dbReference>
<dbReference type="Pfam" id="PF25394">
    <property type="entry name" value="PEX6_vert_N"/>
    <property type="match status" value="1"/>
</dbReference>
<dbReference type="SMART" id="SM00382">
    <property type="entry name" value="AAA"/>
    <property type="match status" value="2"/>
</dbReference>
<dbReference type="SUPFAM" id="SSF52540">
    <property type="entry name" value="P-loop containing nucleoside triphosphate hydrolases"/>
    <property type="match status" value="2"/>
</dbReference>
<dbReference type="PROSITE" id="PS00674">
    <property type="entry name" value="AAA"/>
    <property type="match status" value="1"/>
</dbReference>
<name>PEX6_CRIGR</name>
<proteinExistence type="inferred from homology"/>
<organism>
    <name type="scientific">Cricetulus griseus</name>
    <name type="common">Chinese hamster</name>
    <name type="synonym">Cricetulus barabensis griseus</name>
    <dbReference type="NCBI Taxonomy" id="10029"/>
    <lineage>
        <taxon>Eukaryota</taxon>
        <taxon>Metazoa</taxon>
        <taxon>Chordata</taxon>
        <taxon>Craniata</taxon>
        <taxon>Vertebrata</taxon>
        <taxon>Euteleostomi</taxon>
        <taxon>Mammalia</taxon>
        <taxon>Eutheria</taxon>
        <taxon>Euarchontoglires</taxon>
        <taxon>Glires</taxon>
        <taxon>Rodentia</taxon>
        <taxon>Myomorpha</taxon>
        <taxon>Muroidea</taxon>
        <taxon>Cricetidae</taxon>
        <taxon>Cricetinae</taxon>
        <taxon>Cricetulus</taxon>
    </lineage>
</organism>
<accession>A0A061IR73</accession>
<protein>
    <recommendedName>
        <fullName evidence="6">Peroxisomal ATPase PEX6</fullName>
        <ecNumber evidence="1">3.6.4.-</ecNumber>
    </recommendedName>
    <alternativeName>
        <fullName evidence="6">Peroxin-6</fullName>
    </alternativeName>
    <alternativeName>
        <fullName evidence="6">Peroxisomal biogenesis factor 6</fullName>
    </alternativeName>
</protein>
<comment type="function">
    <text evidence="1 3 4">Component of the PEX1-PEX6 AAA ATPase complex, a protein dislocase complex that mediates the ATP-dependent extraction of the PEX5 receptor from peroxisomal membranes, an essential step for PEX5 recycling (PubMed:23929341, PubMed:9539740). Specifically recognizes PEX5 monoubiquitinated at 'Cys-11', and pulls it out of the peroxisome lumen through the PEX2-PEX10-PEX12 retrotranslocation channel (By similarity). Extraction by the PEX1-PEX6 AAA ATPase complex is accompanied by unfolding of the TPR repeats and release of bound cargo from PEX5 (By similarity).</text>
</comment>
<comment type="catalytic activity">
    <reaction evidence="1">
        <text>ATP + H2O = ADP + phosphate + H(+)</text>
        <dbReference type="Rhea" id="RHEA:13065"/>
        <dbReference type="ChEBI" id="CHEBI:15377"/>
        <dbReference type="ChEBI" id="CHEBI:15378"/>
        <dbReference type="ChEBI" id="CHEBI:30616"/>
        <dbReference type="ChEBI" id="CHEBI:43474"/>
        <dbReference type="ChEBI" id="CHEBI:456216"/>
    </reaction>
    <physiologicalReaction direction="left-to-right" evidence="1">
        <dbReference type="Rhea" id="RHEA:13066"/>
    </physiologicalReaction>
</comment>
<comment type="subunit">
    <text evidence="1">Interacts with PEX1; forming the PEX1-PEX6 AAA ATPase complex, which is composed of a heterohexamer formed by a trimer of PEX1-PEX6 dimers. Interacts with PEX26; interaction is direct and promotes recruitment to peroxisomal membranes. Interacts with ZFAND6.</text>
</comment>
<comment type="subcellular location">
    <subcellularLocation>
        <location evidence="1">Cytoplasm</location>
        <location evidence="1">Cytosol</location>
    </subcellularLocation>
    <subcellularLocation>
        <location evidence="1">Peroxisome membrane</location>
    </subcellularLocation>
    <subcellularLocation>
        <location evidence="1">Cell projection</location>
        <location evidence="1">Cilium</location>
        <location evidence="1">Photoreceptor outer segment</location>
    </subcellularLocation>
    <text evidence="1">Associated with peroxisomal membranes; anchored by PEX26 to peroxisome membranes. Localized at the base of the outer segment of photoreceptor cells.</text>
</comment>
<comment type="similarity">
    <text evidence="6">Belongs to the AAA ATPase family.</text>
</comment>
<evidence type="ECO:0000250" key="1">
    <source>
        <dbReference type="UniProtKB" id="Q13608"/>
    </source>
</evidence>
<evidence type="ECO:0000255" key="2"/>
<evidence type="ECO:0000269" key="3">
    <source>
    </source>
</evidence>
<evidence type="ECO:0000269" key="4">
    <source>
    </source>
</evidence>
<evidence type="ECO:0000303" key="5">
    <source>
    </source>
</evidence>
<evidence type="ECO:0000305" key="6"/>